<proteinExistence type="inferred from homology"/>
<evidence type="ECO:0000255" key="1">
    <source>
        <dbReference type="HAMAP-Rule" id="MF_00144"/>
    </source>
</evidence>
<reference key="1">
    <citation type="submission" date="2006-12" db="EMBL/GenBank/DDBJ databases">
        <title>Complete sequence of chromosome 1 of Acidovorax sp. JS42.</title>
        <authorList>
            <person name="Copeland A."/>
            <person name="Lucas S."/>
            <person name="Lapidus A."/>
            <person name="Barry K."/>
            <person name="Detter J.C."/>
            <person name="Glavina del Rio T."/>
            <person name="Dalin E."/>
            <person name="Tice H."/>
            <person name="Pitluck S."/>
            <person name="Chertkov O."/>
            <person name="Brettin T."/>
            <person name="Bruce D."/>
            <person name="Han C."/>
            <person name="Tapia R."/>
            <person name="Gilna P."/>
            <person name="Schmutz J."/>
            <person name="Larimer F."/>
            <person name="Land M."/>
            <person name="Hauser L."/>
            <person name="Kyrpides N."/>
            <person name="Kim E."/>
            <person name="Stahl D."/>
            <person name="Richardson P."/>
        </authorList>
    </citation>
    <scope>NUCLEOTIDE SEQUENCE [LARGE SCALE GENOMIC DNA]</scope>
    <source>
        <strain>JS42</strain>
    </source>
</reference>
<sequence>MKKHRVVVGLSGGVDSAVTAHLLKQQGHEVVGIFMKNWEDDDDSEFCSSRQDFLDAASVADVIGIEIEHVNFAAEYKDRVFAEFLREYQAGRTPNPDVLCNAEIKFKAFLDHAMRLGAEKIATGHYARVRQNPATGLFELLKGLDPSKDQSYFLHRLNQAQLSKTLFPVGELHKTEVRRIAADIGLPNAKKKDSTGICFIGERPFREFLNRYIQHAPGPILDDRGRKLGRHVGLSFYTLGQRQGLGIGGVKEKGAGAKAPSGQPVRGAGDHAPWFVARKELETNTLRVVQGHEHPWLLSHRLDAQDASWIAGHPPAAGACAAKTRYRQQDAACTVLAAQGDAFNLQFPEAQWAVTPGQSAVLYDGEVCLGGGVIAAVNG</sequence>
<dbReference type="EC" id="2.8.1.13" evidence="1"/>
<dbReference type="EMBL" id="CP000539">
    <property type="protein sequence ID" value="ABM44172.1"/>
    <property type="molecule type" value="Genomic_DNA"/>
</dbReference>
<dbReference type="SMR" id="A1WD47"/>
<dbReference type="STRING" id="232721.Ajs_4068"/>
<dbReference type="KEGG" id="ajs:Ajs_4068"/>
<dbReference type="eggNOG" id="COG0482">
    <property type="taxonomic scope" value="Bacteria"/>
</dbReference>
<dbReference type="HOGENOM" id="CLU_035188_1_0_4"/>
<dbReference type="Proteomes" id="UP000000645">
    <property type="component" value="Chromosome"/>
</dbReference>
<dbReference type="GO" id="GO:0005737">
    <property type="term" value="C:cytoplasm"/>
    <property type="evidence" value="ECO:0007669"/>
    <property type="project" value="UniProtKB-SubCell"/>
</dbReference>
<dbReference type="GO" id="GO:0005524">
    <property type="term" value="F:ATP binding"/>
    <property type="evidence" value="ECO:0007669"/>
    <property type="project" value="UniProtKB-KW"/>
</dbReference>
<dbReference type="GO" id="GO:0000049">
    <property type="term" value="F:tRNA binding"/>
    <property type="evidence" value="ECO:0007669"/>
    <property type="project" value="UniProtKB-KW"/>
</dbReference>
<dbReference type="GO" id="GO:0103016">
    <property type="term" value="F:tRNA-uridine 2-sulfurtransferase activity"/>
    <property type="evidence" value="ECO:0007669"/>
    <property type="project" value="UniProtKB-EC"/>
</dbReference>
<dbReference type="GO" id="GO:0002143">
    <property type="term" value="P:tRNA wobble position uridine thiolation"/>
    <property type="evidence" value="ECO:0007669"/>
    <property type="project" value="TreeGrafter"/>
</dbReference>
<dbReference type="CDD" id="cd01998">
    <property type="entry name" value="MnmA_TRMU-like"/>
    <property type="match status" value="1"/>
</dbReference>
<dbReference type="FunFam" id="2.30.30.280:FF:000001">
    <property type="entry name" value="tRNA-specific 2-thiouridylase MnmA"/>
    <property type="match status" value="1"/>
</dbReference>
<dbReference type="FunFam" id="2.40.30.10:FF:000023">
    <property type="entry name" value="tRNA-specific 2-thiouridylase MnmA"/>
    <property type="match status" value="1"/>
</dbReference>
<dbReference type="FunFam" id="3.40.50.620:FF:000004">
    <property type="entry name" value="tRNA-specific 2-thiouridylase MnmA"/>
    <property type="match status" value="1"/>
</dbReference>
<dbReference type="Gene3D" id="2.30.30.280">
    <property type="entry name" value="Adenine nucleotide alpha hydrolases-like domains"/>
    <property type="match status" value="1"/>
</dbReference>
<dbReference type="Gene3D" id="3.40.50.620">
    <property type="entry name" value="HUPs"/>
    <property type="match status" value="1"/>
</dbReference>
<dbReference type="Gene3D" id="2.40.30.10">
    <property type="entry name" value="Translation factors"/>
    <property type="match status" value="1"/>
</dbReference>
<dbReference type="HAMAP" id="MF_00144">
    <property type="entry name" value="tRNA_thiouridyl_MnmA"/>
    <property type="match status" value="1"/>
</dbReference>
<dbReference type="InterPro" id="IPR004506">
    <property type="entry name" value="MnmA-like"/>
</dbReference>
<dbReference type="InterPro" id="IPR046885">
    <property type="entry name" value="MnmA-like_C"/>
</dbReference>
<dbReference type="InterPro" id="IPR046884">
    <property type="entry name" value="MnmA-like_central"/>
</dbReference>
<dbReference type="InterPro" id="IPR023382">
    <property type="entry name" value="MnmA-like_central_sf"/>
</dbReference>
<dbReference type="InterPro" id="IPR014729">
    <property type="entry name" value="Rossmann-like_a/b/a_fold"/>
</dbReference>
<dbReference type="NCBIfam" id="NF001138">
    <property type="entry name" value="PRK00143.1"/>
    <property type="match status" value="1"/>
</dbReference>
<dbReference type="NCBIfam" id="TIGR00420">
    <property type="entry name" value="trmU"/>
    <property type="match status" value="1"/>
</dbReference>
<dbReference type="PANTHER" id="PTHR11933:SF5">
    <property type="entry name" value="MITOCHONDRIAL TRNA-SPECIFIC 2-THIOURIDYLASE 1"/>
    <property type="match status" value="1"/>
</dbReference>
<dbReference type="PANTHER" id="PTHR11933">
    <property type="entry name" value="TRNA 5-METHYLAMINOMETHYL-2-THIOURIDYLATE -METHYLTRANSFERASE"/>
    <property type="match status" value="1"/>
</dbReference>
<dbReference type="Pfam" id="PF03054">
    <property type="entry name" value="tRNA_Me_trans"/>
    <property type="match status" value="1"/>
</dbReference>
<dbReference type="Pfam" id="PF20258">
    <property type="entry name" value="tRNA_Me_trans_C"/>
    <property type="match status" value="1"/>
</dbReference>
<dbReference type="Pfam" id="PF20259">
    <property type="entry name" value="tRNA_Me_trans_M"/>
    <property type="match status" value="1"/>
</dbReference>
<dbReference type="SUPFAM" id="SSF52402">
    <property type="entry name" value="Adenine nucleotide alpha hydrolases-like"/>
    <property type="match status" value="1"/>
</dbReference>
<comment type="function">
    <text evidence="1">Catalyzes the 2-thiolation of uridine at the wobble position (U34) of tRNA, leading to the formation of s(2)U34.</text>
</comment>
<comment type="catalytic activity">
    <reaction evidence="1">
        <text>S-sulfanyl-L-cysteinyl-[protein] + uridine(34) in tRNA + AH2 + ATP = 2-thiouridine(34) in tRNA + L-cysteinyl-[protein] + A + AMP + diphosphate + H(+)</text>
        <dbReference type="Rhea" id="RHEA:47032"/>
        <dbReference type="Rhea" id="RHEA-COMP:10131"/>
        <dbReference type="Rhea" id="RHEA-COMP:11726"/>
        <dbReference type="Rhea" id="RHEA-COMP:11727"/>
        <dbReference type="Rhea" id="RHEA-COMP:11728"/>
        <dbReference type="ChEBI" id="CHEBI:13193"/>
        <dbReference type="ChEBI" id="CHEBI:15378"/>
        <dbReference type="ChEBI" id="CHEBI:17499"/>
        <dbReference type="ChEBI" id="CHEBI:29950"/>
        <dbReference type="ChEBI" id="CHEBI:30616"/>
        <dbReference type="ChEBI" id="CHEBI:33019"/>
        <dbReference type="ChEBI" id="CHEBI:61963"/>
        <dbReference type="ChEBI" id="CHEBI:65315"/>
        <dbReference type="ChEBI" id="CHEBI:87170"/>
        <dbReference type="ChEBI" id="CHEBI:456215"/>
        <dbReference type="EC" id="2.8.1.13"/>
    </reaction>
</comment>
<comment type="subcellular location">
    <subcellularLocation>
        <location evidence="1">Cytoplasm</location>
    </subcellularLocation>
</comment>
<comment type="similarity">
    <text evidence="1">Belongs to the MnmA/TRMU family.</text>
</comment>
<feature type="chain" id="PRO_0000349497" description="tRNA-specific 2-thiouridylase MnmA">
    <location>
        <begin position="1"/>
        <end position="379"/>
    </location>
</feature>
<feature type="region of interest" description="Interaction with target base in tRNA" evidence="1">
    <location>
        <begin position="95"/>
        <end position="97"/>
    </location>
</feature>
<feature type="region of interest" description="Interaction with tRNA" evidence="1">
    <location>
        <begin position="148"/>
        <end position="150"/>
    </location>
</feature>
<feature type="region of interest" description="Interaction with tRNA" evidence="1">
    <location>
        <begin position="325"/>
        <end position="326"/>
    </location>
</feature>
<feature type="active site" description="Nucleophile" evidence="1">
    <location>
        <position position="100"/>
    </location>
</feature>
<feature type="active site" description="Cysteine persulfide intermediate" evidence="1">
    <location>
        <position position="198"/>
    </location>
</feature>
<feature type="binding site" evidence="1">
    <location>
        <begin position="9"/>
        <end position="16"/>
    </location>
    <ligand>
        <name>ATP</name>
        <dbReference type="ChEBI" id="CHEBI:30616"/>
    </ligand>
</feature>
<feature type="binding site" evidence="1">
    <location>
        <position position="35"/>
    </location>
    <ligand>
        <name>ATP</name>
        <dbReference type="ChEBI" id="CHEBI:30616"/>
    </ligand>
</feature>
<feature type="binding site" evidence="1">
    <location>
        <position position="124"/>
    </location>
    <ligand>
        <name>ATP</name>
        <dbReference type="ChEBI" id="CHEBI:30616"/>
    </ligand>
</feature>
<feature type="site" description="Interaction with tRNA" evidence="1">
    <location>
        <position position="125"/>
    </location>
</feature>
<feature type="site" description="Interaction with tRNA" evidence="1">
    <location>
        <position position="358"/>
    </location>
</feature>
<feature type="disulfide bond" description="Alternate" evidence="1">
    <location>
        <begin position="100"/>
        <end position="198"/>
    </location>
</feature>
<organism>
    <name type="scientific">Acidovorax sp. (strain JS42)</name>
    <dbReference type="NCBI Taxonomy" id="232721"/>
    <lineage>
        <taxon>Bacteria</taxon>
        <taxon>Pseudomonadati</taxon>
        <taxon>Pseudomonadota</taxon>
        <taxon>Betaproteobacteria</taxon>
        <taxon>Burkholderiales</taxon>
        <taxon>Comamonadaceae</taxon>
        <taxon>Acidovorax</taxon>
    </lineage>
</organism>
<protein>
    <recommendedName>
        <fullName evidence="1">tRNA-specific 2-thiouridylase MnmA</fullName>
        <ecNumber evidence="1">2.8.1.13</ecNumber>
    </recommendedName>
</protein>
<accession>A1WD47</accession>
<gene>
    <name evidence="1" type="primary">mnmA</name>
    <name type="ordered locus">Ajs_4068</name>
</gene>
<keyword id="KW-0067">ATP-binding</keyword>
<keyword id="KW-0963">Cytoplasm</keyword>
<keyword id="KW-1015">Disulfide bond</keyword>
<keyword id="KW-0547">Nucleotide-binding</keyword>
<keyword id="KW-0694">RNA-binding</keyword>
<keyword id="KW-0808">Transferase</keyword>
<keyword id="KW-0819">tRNA processing</keyword>
<keyword id="KW-0820">tRNA-binding</keyword>
<name>MNMA_ACISJ</name>